<evidence type="ECO:0000255" key="1">
    <source>
        <dbReference type="HAMAP-Rule" id="MF_00561"/>
    </source>
</evidence>
<dbReference type="EC" id="2.7.1.146" evidence="1"/>
<dbReference type="EMBL" id="AP006878">
    <property type="protein sequence ID" value="BAD84565.1"/>
    <property type="molecule type" value="Genomic_DNA"/>
</dbReference>
<dbReference type="RefSeq" id="WP_011249331.1">
    <property type="nucleotide sequence ID" value="NC_006624.1"/>
</dbReference>
<dbReference type="SMR" id="Q5JD05"/>
<dbReference type="FunCoup" id="Q5JD05">
    <property type="interactions" value="84"/>
</dbReference>
<dbReference type="STRING" id="69014.TK0376"/>
<dbReference type="EnsemblBacteria" id="BAD84565">
    <property type="protein sequence ID" value="BAD84565"/>
    <property type="gene ID" value="TK0376"/>
</dbReference>
<dbReference type="GeneID" id="78446882"/>
<dbReference type="KEGG" id="tko:TK0376"/>
<dbReference type="PATRIC" id="fig|69014.16.peg.373"/>
<dbReference type="eggNOG" id="arCOG03370">
    <property type="taxonomic scope" value="Archaea"/>
</dbReference>
<dbReference type="HOGENOM" id="CLU_046643_0_0_2"/>
<dbReference type="InParanoid" id="Q5JD05"/>
<dbReference type="OrthoDB" id="85200at2157"/>
<dbReference type="PhylomeDB" id="Q5JD05"/>
<dbReference type="BRENDA" id="2.7.1.11">
    <property type="organism ID" value="5246"/>
</dbReference>
<dbReference type="BRENDA" id="2.7.1.146">
    <property type="organism ID" value="5246"/>
</dbReference>
<dbReference type="UniPathway" id="UPA00109"/>
<dbReference type="Proteomes" id="UP000000536">
    <property type="component" value="Chromosome"/>
</dbReference>
<dbReference type="GO" id="GO:0005737">
    <property type="term" value="C:cytoplasm"/>
    <property type="evidence" value="ECO:0007669"/>
    <property type="project" value="UniProtKB-SubCell"/>
</dbReference>
<dbReference type="GO" id="GO:0043844">
    <property type="term" value="F:ADP-specific phosphofructokinase activity"/>
    <property type="evidence" value="ECO:0007669"/>
    <property type="project" value="UniProtKB-EC"/>
</dbReference>
<dbReference type="GO" id="GO:0000287">
    <property type="term" value="F:magnesium ion binding"/>
    <property type="evidence" value="ECO:0007669"/>
    <property type="project" value="InterPro"/>
</dbReference>
<dbReference type="GO" id="GO:0008443">
    <property type="term" value="F:phosphofructokinase activity"/>
    <property type="evidence" value="ECO:0007669"/>
    <property type="project" value="InterPro"/>
</dbReference>
<dbReference type="GO" id="GO:0005975">
    <property type="term" value="P:carbohydrate metabolic process"/>
    <property type="evidence" value="ECO:0000318"/>
    <property type="project" value="GO_Central"/>
</dbReference>
<dbReference type="GO" id="GO:0006000">
    <property type="term" value="P:fructose metabolic process"/>
    <property type="evidence" value="ECO:0007669"/>
    <property type="project" value="InterPro"/>
</dbReference>
<dbReference type="GO" id="GO:0006096">
    <property type="term" value="P:glycolytic process"/>
    <property type="evidence" value="ECO:0007669"/>
    <property type="project" value="UniProtKB-UniRule"/>
</dbReference>
<dbReference type="Gene3D" id="3.30.1110.20">
    <property type="match status" value="1"/>
</dbReference>
<dbReference type="Gene3D" id="3.40.1190.20">
    <property type="match status" value="1"/>
</dbReference>
<dbReference type="HAMAP" id="MF_00561">
    <property type="entry name" value="ADP_PFKinase"/>
    <property type="match status" value="1"/>
</dbReference>
<dbReference type="InterPro" id="IPR007666">
    <property type="entry name" value="ADP_PFK/GK"/>
</dbReference>
<dbReference type="InterPro" id="IPR015990">
    <property type="entry name" value="ADP_PFK/GK_arc"/>
</dbReference>
<dbReference type="InterPro" id="IPR011790">
    <property type="entry name" value="ADP_PFK_arc"/>
</dbReference>
<dbReference type="InterPro" id="IPR029056">
    <property type="entry name" value="Ribokinase-like"/>
</dbReference>
<dbReference type="NCBIfam" id="TIGR02045">
    <property type="entry name" value="P_fruct_ADP"/>
    <property type="match status" value="1"/>
</dbReference>
<dbReference type="PANTHER" id="PTHR21208">
    <property type="entry name" value="ADP-DEPENDENT GLUCOKINASE"/>
    <property type="match status" value="1"/>
</dbReference>
<dbReference type="PANTHER" id="PTHR21208:SF1">
    <property type="entry name" value="ADP-DEPENDENT GLUCOKINASE"/>
    <property type="match status" value="1"/>
</dbReference>
<dbReference type="Pfam" id="PF04587">
    <property type="entry name" value="ADP_PFK_GK"/>
    <property type="match status" value="1"/>
</dbReference>
<dbReference type="PIRSF" id="PIRSF015883">
    <property type="entry name" value="ADP-Pfk_glckin"/>
    <property type="match status" value="1"/>
</dbReference>
<dbReference type="SUPFAM" id="SSF53613">
    <property type="entry name" value="Ribokinase-like"/>
    <property type="match status" value="1"/>
</dbReference>
<dbReference type="PROSITE" id="PS51255">
    <property type="entry name" value="ADPK"/>
    <property type="match status" value="1"/>
</dbReference>
<gene>
    <name evidence="1" type="primary">pfkC</name>
    <name type="ordered locus">TK0376</name>
</gene>
<sequence>MVRELLEKARGLSMFTAYNTNVDAIVYLNGETVQRLIDEFGAEAVKRRMEEYPREINEPLDFVARLVHALKTGKPMAVPLVNEELQAWFDSHFKYDVERMGGQAGIIANLLANLDFREVLVYTPHLAKRQAEMFVKKPNLFYPVVEGGKLVLKHPWEAYRENDPVKVNRIFEFRAGTTFRLGNETITVPFSGRFIVSARFESIRIYTEPELKPFLPEIGQRVDGAILSGYQGIKLRYSDGKDANYYLREAKKDILLLKREKDVKVHLEFASIQNRELRKKVIYNLFPLVDSVGMDEAEIAYVLSALGYDKLAERIFTYNRIEDTVLGGKILIDEMNLELLQIHTIYYIMYIAHANNPLSEAELRQSLELATTLAASRASLGDIASPDQISVGMNVPYNERGEYVKLRFEEAKRRLRTKEYKLVIIPTRLVQNPVSTVGLGDTISTGAFTSYLAMLKEKGEL</sequence>
<keyword id="KW-0963">Cytoplasm</keyword>
<keyword id="KW-0324">Glycolysis</keyword>
<keyword id="KW-0418">Kinase</keyword>
<keyword id="KW-0460">Magnesium</keyword>
<keyword id="KW-0479">Metal-binding</keyword>
<keyword id="KW-1185">Reference proteome</keyword>
<keyword id="KW-0808">Transferase</keyword>
<protein>
    <recommendedName>
        <fullName evidence="1">ADP-specific phosphofructokinase</fullName>
        <ecNumber evidence="1">2.7.1.146</ecNumber>
    </recommendedName>
    <alternativeName>
        <fullName evidence="1">ADP-dependent phosphofructokinase</fullName>
        <shortName evidence="1">ADP-Pfk</shortName>
    </alternativeName>
</protein>
<reference key="1">
    <citation type="journal article" date="2005" name="Genome Res.">
        <title>Complete genome sequence of the hyperthermophilic archaeon Thermococcus kodakaraensis KOD1 and comparison with Pyrococcus genomes.</title>
        <authorList>
            <person name="Fukui T."/>
            <person name="Atomi H."/>
            <person name="Kanai T."/>
            <person name="Matsumi R."/>
            <person name="Fujiwara S."/>
            <person name="Imanaka T."/>
        </authorList>
    </citation>
    <scope>NUCLEOTIDE SEQUENCE [LARGE SCALE GENOMIC DNA]</scope>
    <source>
        <strain>ATCC BAA-918 / JCM 12380 / KOD1</strain>
    </source>
</reference>
<proteinExistence type="inferred from homology"/>
<name>K6PF_THEKO</name>
<accession>Q5JD05</accession>
<feature type="chain" id="PRO_0000184768" description="ADP-specific phosphofructokinase">
    <location>
        <begin position="1"/>
        <end position="461"/>
    </location>
</feature>
<feature type="domain" description="ADPK" evidence="1">
    <location>
        <begin position="1"/>
        <end position="457"/>
    </location>
</feature>
<feature type="active site" description="Proton acceptor" evidence="1">
    <location>
        <position position="441"/>
    </location>
</feature>
<feature type="binding site" evidence="1">
    <location>
        <position position="268"/>
    </location>
    <ligand>
        <name>Mg(2+)</name>
        <dbReference type="ChEBI" id="CHEBI:18420"/>
    </ligand>
</feature>
<feature type="binding site" evidence="1">
    <location>
        <position position="298"/>
    </location>
    <ligand>
        <name>Mg(2+)</name>
        <dbReference type="ChEBI" id="CHEBI:18420"/>
    </ligand>
</feature>
<feature type="binding site" evidence="1">
    <location>
        <position position="441"/>
    </location>
    <ligand>
        <name>Mg(2+)</name>
        <dbReference type="ChEBI" id="CHEBI:18420"/>
    </ligand>
</feature>
<organism>
    <name type="scientific">Thermococcus kodakarensis (strain ATCC BAA-918 / JCM 12380 / KOD1)</name>
    <name type="common">Pyrococcus kodakaraensis (strain KOD1)</name>
    <dbReference type="NCBI Taxonomy" id="69014"/>
    <lineage>
        <taxon>Archaea</taxon>
        <taxon>Methanobacteriati</taxon>
        <taxon>Methanobacteriota</taxon>
        <taxon>Thermococci</taxon>
        <taxon>Thermococcales</taxon>
        <taxon>Thermococcaceae</taxon>
        <taxon>Thermococcus</taxon>
    </lineage>
</organism>
<comment type="function">
    <text evidence="1">Catalyzes the phosphorylation of fructose 6-phosphate to fructose 1,6-bisphosphate using ADP as the phosphate donor.</text>
</comment>
<comment type="catalytic activity">
    <reaction evidence="1">
        <text>beta-D-fructose 6-phosphate + ADP = beta-D-fructose 1,6-bisphosphate + AMP + H(+)</text>
        <dbReference type="Rhea" id="RHEA:20105"/>
        <dbReference type="ChEBI" id="CHEBI:15378"/>
        <dbReference type="ChEBI" id="CHEBI:32966"/>
        <dbReference type="ChEBI" id="CHEBI:57634"/>
        <dbReference type="ChEBI" id="CHEBI:456215"/>
        <dbReference type="ChEBI" id="CHEBI:456216"/>
        <dbReference type="EC" id="2.7.1.146"/>
    </reaction>
</comment>
<comment type="cofactor">
    <cofactor evidence="1">
        <name>Mg(2+)</name>
        <dbReference type="ChEBI" id="CHEBI:18420"/>
    </cofactor>
    <text evidence="1">Binds 1 Mg(2+) ion per subunit.</text>
</comment>
<comment type="pathway">
    <text evidence="1">Carbohydrate degradation; glycolysis.</text>
</comment>
<comment type="subcellular location">
    <subcellularLocation>
        <location evidence="1">Cytoplasm</location>
    </subcellularLocation>
</comment>
<comment type="similarity">
    <text evidence="1">Belongs to the carbohydrate kinase PfkC family.</text>
</comment>